<keyword id="KW-0238">DNA-binding</keyword>
<keyword id="KW-0479">Metal-binding</keyword>
<keyword id="KW-0539">Nucleus</keyword>
<keyword id="KW-1185">Reference proteome</keyword>
<keyword id="KW-0677">Repeat</keyword>
<keyword id="KW-0804">Transcription</keyword>
<keyword id="KW-0805">Transcription regulation</keyword>
<keyword id="KW-0862">Zinc</keyword>
<accession>P59583</accession>
<accession>O65556</accession>
<feature type="chain" id="PRO_0000133674" description="Probable WRKY transcription factor 32">
    <location>
        <begin position="1"/>
        <end position="466"/>
    </location>
</feature>
<feature type="DNA-binding region" description="WRKY 1" evidence="2">
    <location>
        <begin position="162"/>
        <end position="226"/>
    </location>
</feature>
<feature type="DNA-binding region" description="WRKY 2" evidence="2">
    <location>
        <begin position="325"/>
        <end position="390"/>
    </location>
</feature>
<feature type="region of interest" description="Disordered" evidence="3">
    <location>
        <begin position="1"/>
        <end position="45"/>
    </location>
</feature>
<feature type="region of interest" description="Disordered" evidence="3">
    <location>
        <begin position="140"/>
        <end position="166"/>
    </location>
</feature>
<feature type="region of interest" description="Disordered" evidence="3">
    <location>
        <begin position="284"/>
        <end position="317"/>
    </location>
</feature>
<feature type="region of interest" description="Disordered" evidence="3">
    <location>
        <begin position="410"/>
        <end position="439"/>
    </location>
</feature>
<feature type="compositionally biased region" description="Basic and acidic residues" evidence="3">
    <location>
        <begin position="8"/>
        <end position="38"/>
    </location>
</feature>
<feature type="compositionally biased region" description="Polar residues" evidence="3">
    <location>
        <begin position="419"/>
        <end position="429"/>
    </location>
</feature>
<feature type="binding site" evidence="1">
    <location>
        <position position="193"/>
    </location>
    <ligand>
        <name>Zn(2+)</name>
        <dbReference type="ChEBI" id="CHEBI:29105"/>
    </ligand>
</feature>
<feature type="binding site" evidence="1">
    <location>
        <position position="198"/>
    </location>
    <ligand>
        <name>Zn(2+)</name>
        <dbReference type="ChEBI" id="CHEBI:29105"/>
    </ligand>
</feature>
<feature type="binding site" evidence="1">
    <location>
        <position position="221"/>
    </location>
    <ligand>
        <name>Zn(2+)</name>
        <dbReference type="ChEBI" id="CHEBI:29105"/>
    </ligand>
</feature>
<feature type="binding site" evidence="1">
    <location>
        <position position="223"/>
    </location>
    <ligand>
        <name>Zn(2+)</name>
        <dbReference type="ChEBI" id="CHEBI:29105"/>
    </ligand>
</feature>
<feature type="binding site" evidence="1">
    <location>
        <position position="356"/>
    </location>
    <ligand>
        <name>Zn(2+)</name>
        <dbReference type="ChEBI" id="CHEBI:29105"/>
    </ligand>
</feature>
<feature type="binding site" evidence="1">
    <location>
        <position position="361"/>
    </location>
    <ligand>
        <name>Zn(2+)</name>
        <dbReference type="ChEBI" id="CHEBI:29105"/>
    </ligand>
</feature>
<feature type="binding site" evidence="1">
    <location>
        <position position="385"/>
    </location>
    <ligand>
        <name>Zn(2+)</name>
        <dbReference type="ChEBI" id="CHEBI:29105"/>
    </ligand>
</feature>
<feature type="binding site" evidence="1">
    <location>
        <position position="387"/>
    </location>
    <ligand>
        <name>Zn(2+)</name>
        <dbReference type="ChEBI" id="CHEBI:29105"/>
    </ligand>
</feature>
<comment type="function">
    <text evidence="1">Transcription factor. Interacts specifically with the W box (5'-(T)TGAC[CT]-3'), a frequently occurring elicitor-responsive cis-acting element.</text>
</comment>
<comment type="subcellular location">
    <subcellularLocation>
        <location evidence="1">Nucleus</location>
    </subcellularLocation>
</comment>
<comment type="similarity">
    <text evidence="4">Belongs to the WRKY group I family.</text>
</comment>
<comment type="sequence caution" evidence="4">
    <conflict type="erroneous gene model prediction">
        <sequence resource="EMBL-CDS" id="CAA18200"/>
    </conflict>
    <text>The predicted gene At4g30930 has been split into 2 genes: At4g30935 and At4g30930.</text>
</comment>
<comment type="sequence caution" evidence="4">
    <conflict type="erroneous gene model prediction">
        <sequence resource="EMBL-CDS" id="CAB79811"/>
    </conflict>
    <text>The predicted gene At4g30930 has been split into 2 genes: At4g30935 and At4g30930.</text>
</comment>
<proteinExistence type="evidence at transcript level"/>
<sequence length="466" mass="51480">MEEDTGIDEAKTYTVEKSEKVEPEKDGLSQFRDEEKSLGADMEDLHDETVRETLGKDQVQGVRENSSVEPNVEDVLEVNETDSVKETVVSAIVPVDEVEENRQVETSPSLAASSDSLTVTPCLSLDPATASTAQDLPLVSVPTKQEQRSDSPVVNRLSVTPVPRTPARDGYNWRKYGQKQVKSPKGSRSYYRCTYTECCAKKIECSNDSGNVVEIVNKGLHTHEPPRKTSFSPREIRVTTAIRPVSEDDTVVEELSIVPSGSDPSASTKEYICESQTLVDRKRHCENEAVEEPEPKRRLKKDNSQSSDSVSKPGKKNKFVVHAAGDVGICGDGYRWRKYGQKMVKGNPHPRNYYRCTSAGCPVRKHIETAVENTKAVIITYKGVHNHDMPVPKKRHGPPSSMLVAAAAPTSMRTRTDDQVNIPTSSQCSVGRESEKQSKEALDVGGEKVMESARTLLSIGFEIKQC</sequence>
<protein>
    <recommendedName>
        <fullName>Probable WRKY transcription factor 32</fullName>
    </recommendedName>
    <alternativeName>
        <fullName>WRKY DNA-binding protein 32</fullName>
    </alternativeName>
</protein>
<gene>
    <name type="primary">WRKY32</name>
    <name type="ordered locus">At4g30935</name>
    <name type="ORF">F6I18.4</name>
</gene>
<organism>
    <name type="scientific">Arabidopsis thaliana</name>
    <name type="common">Mouse-ear cress</name>
    <dbReference type="NCBI Taxonomy" id="3702"/>
    <lineage>
        <taxon>Eukaryota</taxon>
        <taxon>Viridiplantae</taxon>
        <taxon>Streptophyta</taxon>
        <taxon>Embryophyta</taxon>
        <taxon>Tracheophyta</taxon>
        <taxon>Spermatophyta</taxon>
        <taxon>Magnoliopsida</taxon>
        <taxon>eudicotyledons</taxon>
        <taxon>Gunneridae</taxon>
        <taxon>Pentapetalae</taxon>
        <taxon>rosids</taxon>
        <taxon>malvids</taxon>
        <taxon>Brassicales</taxon>
        <taxon>Brassicaceae</taxon>
        <taxon>Camelineae</taxon>
        <taxon>Arabidopsis</taxon>
    </lineage>
</organism>
<dbReference type="EMBL" id="AL022198">
    <property type="protein sequence ID" value="CAA18200.1"/>
    <property type="status" value="ALT_SEQ"/>
    <property type="molecule type" value="Genomic_DNA"/>
</dbReference>
<dbReference type="EMBL" id="AL161578">
    <property type="protein sequence ID" value="CAB79811.1"/>
    <property type="status" value="ALT_SEQ"/>
    <property type="molecule type" value="Genomic_DNA"/>
</dbReference>
<dbReference type="EMBL" id="CP002687">
    <property type="protein sequence ID" value="AEE85832.1"/>
    <property type="molecule type" value="Genomic_DNA"/>
</dbReference>
<dbReference type="EMBL" id="BT004086">
    <property type="protein sequence ID" value="AAO42113.1"/>
    <property type="molecule type" value="mRNA"/>
</dbReference>
<dbReference type="EMBL" id="BT005110">
    <property type="protein sequence ID" value="AAO50643.1"/>
    <property type="molecule type" value="mRNA"/>
</dbReference>
<dbReference type="PIR" id="B85362">
    <property type="entry name" value="B85362"/>
</dbReference>
<dbReference type="RefSeq" id="NP_567862.3">
    <property type="nucleotide sequence ID" value="NM_119241.6"/>
</dbReference>
<dbReference type="SMR" id="P59583"/>
<dbReference type="BioGRID" id="14505">
    <property type="interactions" value="4"/>
</dbReference>
<dbReference type="FunCoup" id="P59583">
    <property type="interactions" value="818"/>
</dbReference>
<dbReference type="IntAct" id="P59583">
    <property type="interactions" value="3"/>
</dbReference>
<dbReference type="STRING" id="3702.P59583"/>
<dbReference type="iPTMnet" id="P59583"/>
<dbReference type="PaxDb" id="3702-AT4G30935.1"/>
<dbReference type="ProteomicsDB" id="234344"/>
<dbReference type="EnsemblPlants" id="AT4G30935.1">
    <property type="protein sequence ID" value="AT4G30935.1"/>
    <property type="gene ID" value="AT4G30935"/>
</dbReference>
<dbReference type="GeneID" id="829218"/>
<dbReference type="Gramene" id="AT4G30935.1">
    <property type="protein sequence ID" value="AT4G30935.1"/>
    <property type="gene ID" value="AT4G30935"/>
</dbReference>
<dbReference type="KEGG" id="ath:AT4G30935"/>
<dbReference type="Araport" id="AT4G30935"/>
<dbReference type="TAIR" id="AT4G30935">
    <property type="gene designation" value="WRKY32"/>
</dbReference>
<dbReference type="eggNOG" id="ENOG502QSNR">
    <property type="taxonomic scope" value="Eukaryota"/>
</dbReference>
<dbReference type="HOGENOM" id="CLU_034997_2_0_1"/>
<dbReference type="InParanoid" id="P59583"/>
<dbReference type="OMA" id="DGPVPMI"/>
<dbReference type="PhylomeDB" id="P59583"/>
<dbReference type="PRO" id="PR:P59583"/>
<dbReference type="Proteomes" id="UP000006548">
    <property type="component" value="Chromosome 4"/>
</dbReference>
<dbReference type="ExpressionAtlas" id="P59583">
    <property type="expression patterns" value="baseline and differential"/>
</dbReference>
<dbReference type="GO" id="GO:0005634">
    <property type="term" value="C:nucleus"/>
    <property type="evidence" value="ECO:0007669"/>
    <property type="project" value="UniProtKB-SubCell"/>
</dbReference>
<dbReference type="GO" id="GO:0003700">
    <property type="term" value="F:DNA-binding transcription factor activity"/>
    <property type="evidence" value="ECO:0000250"/>
    <property type="project" value="TAIR"/>
</dbReference>
<dbReference type="GO" id="GO:0046872">
    <property type="term" value="F:metal ion binding"/>
    <property type="evidence" value="ECO:0007669"/>
    <property type="project" value="UniProtKB-KW"/>
</dbReference>
<dbReference type="GO" id="GO:0043565">
    <property type="term" value="F:sequence-specific DNA binding"/>
    <property type="evidence" value="ECO:0007669"/>
    <property type="project" value="InterPro"/>
</dbReference>
<dbReference type="FunFam" id="2.20.25.80:FF:000006">
    <property type="entry name" value="WRKY transcription factor"/>
    <property type="match status" value="1"/>
</dbReference>
<dbReference type="Gene3D" id="2.20.25.80">
    <property type="entry name" value="WRKY domain"/>
    <property type="match status" value="2"/>
</dbReference>
<dbReference type="InterPro" id="IPR003657">
    <property type="entry name" value="WRKY_dom"/>
</dbReference>
<dbReference type="InterPro" id="IPR036576">
    <property type="entry name" value="WRKY_dom_sf"/>
</dbReference>
<dbReference type="InterPro" id="IPR044810">
    <property type="entry name" value="WRKY_plant"/>
</dbReference>
<dbReference type="PANTHER" id="PTHR31221:SF150">
    <property type="entry name" value="WRKY TRANSCRIPTION FACTOR 32-RELATED"/>
    <property type="match status" value="1"/>
</dbReference>
<dbReference type="PANTHER" id="PTHR31221">
    <property type="entry name" value="WRKY TRANSCRIPTION FACTOR PROTEIN 1-RELATED"/>
    <property type="match status" value="1"/>
</dbReference>
<dbReference type="Pfam" id="PF03106">
    <property type="entry name" value="WRKY"/>
    <property type="match status" value="2"/>
</dbReference>
<dbReference type="SMART" id="SM00774">
    <property type="entry name" value="WRKY"/>
    <property type="match status" value="2"/>
</dbReference>
<dbReference type="SUPFAM" id="SSF118290">
    <property type="entry name" value="WRKY DNA-binding domain"/>
    <property type="match status" value="2"/>
</dbReference>
<dbReference type="PROSITE" id="PS50811">
    <property type="entry name" value="WRKY"/>
    <property type="match status" value="2"/>
</dbReference>
<name>WRK32_ARATH</name>
<reference key="1">
    <citation type="journal article" date="1999" name="Nature">
        <title>Sequence and analysis of chromosome 4 of the plant Arabidopsis thaliana.</title>
        <authorList>
            <person name="Mayer K.F.X."/>
            <person name="Schueller C."/>
            <person name="Wambutt R."/>
            <person name="Murphy G."/>
            <person name="Volckaert G."/>
            <person name="Pohl T."/>
            <person name="Duesterhoeft A."/>
            <person name="Stiekema W."/>
            <person name="Entian K.-D."/>
            <person name="Terryn N."/>
            <person name="Harris B."/>
            <person name="Ansorge W."/>
            <person name="Brandt P."/>
            <person name="Grivell L.A."/>
            <person name="Rieger M."/>
            <person name="Weichselgartner M."/>
            <person name="de Simone V."/>
            <person name="Obermaier B."/>
            <person name="Mache R."/>
            <person name="Mueller M."/>
            <person name="Kreis M."/>
            <person name="Delseny M."/>
            <person name="Puigdomenech P."/>
            <person name="Watson M."/>
            <person name="Schmidtheini T."/>
            <person name="Reichert B."/>
            <person name="Portetelle D."/>
            <person name="Perez-Alonso M."/>
            <person name="Boutry M."/>
            <person name="Bancroft I."/>
            <person name="Vos P."/>
            <person name="Hoheisel J."/>
            <person name="Zimmermann W."/>
            <person name="Wedler H."/>
            <person name="Ridley P."/>
            <person name="Langham S.-A."/>
            <person name="McCullagh B."/>
            <person name="Bilham L."/>
            <person name="Robben J."/>
            <person name="van der Schueren J."/>
            <person name="Grymonprez B."/>
            <person name="Chuang Y.-J."/>
            <person name="Vandenbussche F."/>
            <person name="Braeken M."/>
            <person name="Weltjens I."/>
            <person name="Voet M."/>
            <person name="Bastiaens I."/>
            <person name="Aert R."/>
            <person name="Defoor E."/>
            <person name="Weitzenegger T."/>
            <person name="Bothe G."/>
            <person name="Ramsperger U."/>
            <person name="Hilbert H."/>
            <person name="Braun M."/>
            <person name="Holzer E."/>
            <person name="Brandt A."/>
            <person name="Peters S."/>
            <person name="van Staveren M."/>
            <person name="Dirkse W."/>
            <person name="Mooijman P."/>
            <person name="Klein Lankhorst R."/>
            <person name="Rose M."/>
            <person name="Hauf J."/>
            <person name="Koetter P."/>
            <person name="Berneiser S."/>
            <person name="Hempel S."/>
            <person name="Feldpausch M."/>
            <person name="Lamberth S."/>
            <person name="Van den Daele H."/>
            <person name="De Keyser A."/>
            <person name="Buysshaert C."/>
            <person name="Gielen J."/>
            <person name="Villarroel R."/>
            <person name="De Clercq R."/>
            <person name="van Montagu M."/>
            <person name="Rogers J."/>
            <person name="Cronin A."/>
            <person name="Quail M.A."/>
            <person name="Bray-Allen S."/>
            <person name="Clark L."/>
            <person name="Doggett J."/>
            <person name="Hall S."/>
            <person name="Kay M."/>
            <person name="Lennard N."/>
            <person name="McLay K."/>
            <person name="Mayes R."/>
            <person name="Pettett A."/>
            <person name="Rajandream M.A."/>
            <person name="Lyne M."/>
            <person name="Benes V."/>
            <person name="Rechmann S."/>
            <person name="Borkova D."/>
            <person name="Bloecker H."/>
            <person name="Scharfe M."/>
            <person name="Grimm M."/>
            <person name="Loehnert T.-H."/>
            <person name="Dose S."/>
            <person name="de Haan M."/>
            <person name="Maarse A.C."/>
            <person name="Schaefer M."/>
            <person name="Mueller-Auer S."/>
            <person name="Gabel C."/>
            <person name="Fuchs M."/>
            <person name="Fartmann B."/>
            <person name="Granderath K."/>
            <person name="Dauner D."/>
            <person name="Herzl A."/>
            <person name="Neumann S."/>
            <person name="Argiriou A."/>
            <person name="Vitale D."/>
            <person name="Liguori R."/>
            <person name="Piravandi E."/>
            <person name="Massenet O."/>
            <person name="Quigley F."/>
            <person name="Clabauld G."/>
            <person name="Muendlein A."/>
            <person name="Felber R."/>
            <person name="Schnabl S."/>
            <person name="Hiller R."/>
            <person name="Schmidt W."/>
            <person name="Lecharny A."/>
            <person name="Aubourg S."/>
            <person name="Chefdor F."/>
            <person name="Cooke R."/>
            <person name="Berger C."/>
            <person name="Monfort A."/>
            <person name="Casacuberta E."/>
            <person name="Gibbons T."/>
            <person name="Weber N."/>
            <person name="Vandenbol M."/>
            <person name="Bargues M."/>
            <person name="Terol J."/>
            <person name="Torres A."/>
            <person name="Perez-Perez A."/>
            <person name="Purnelle B."/>
            <person name="Bent E."/>
            <person name="Johnson S."/>
            <person name="Tacon D."/>
            <person name="Jesse T."/>
            <person name="Heijnen L."/>
            <person name="Schwarz S."/>
            <person name="Scholler P."/>
            <person name="Heber S."/>
            <person name="Francs P."/>
            <person name="Bielke C."/>
            <person name="Frishman D."/>
            <person name="Haase D."/>
            <person name="Lemcke K."/>
            <person name="Mewes H.-W."/>
            <person name="Stocker S."/>
            <person name="Zaccaria P."/>
            <person name="Bevan M."/>
            <person name="Wilson R.K."/>
            <person name="de la Bastide M."/>
            <person name="Habermann K."/>
            <person name="Parnell L."/>
            <person name="Dedhia N."/>
            <person name="Gnoj L."/>
            <person name="Schutz K."/>
            <person name="Huang E."/>
            <person name="Spiegel L."/>
            <person name="Sekhon M."/>
            <person name="Murray J."/>
            <person name="Sheet P."/>
            <person name="Cordes M."/>
            <person name="Abu-Threideh J."/>
            <person name="Stoneking T."/>
            <person name="Kalicki J."/>
            <person name="Graves T."/>
            <person name="Harmon G."/>
            <person name="Edwards J."/>
            <person name="Latreille P."/>
            <person name="Courtney L."/>
            <person name="Cloud J."/>
            <person name="Abbott A."/>
            <person name="Scott K."/>
            <person name="Johnson D."/>
            <person name="Minx P."/>
            <person name="Bentley D."/>
            <person name="Fulton B."/>
            <person name="Miller N."/>
            <person name="Greco T."/>
            <person name="Kemp K."/>
            <person name="Kramer J."/>
            <person name="Fulton L."/>
            <person name="Mardis E."/>
            <person name="Dante M."/>
            <person name="Pepin K."/>
            <person name="Hillier L.W."/>
            <person name="Nelson J."/>
            <person name="Spieth J."/>
            <person name="Ryan E."/>
            <person name="Andrews S."/>
            <person name="Geisel C."/>
            <person name="Layman D."/>
            <person name="Du H."/>
            <person name="Ali J."/>
            <person name="Berghoff A."/>
            <person name="Jones K."/>
            <person name="Drone K."/>
            <person name="Cotton M."/>
            <person name="Joshu C."/>
            <person name="Antonoiu B."/>
            <person name="Zidanic M."/>
            <person name="Strong C."/>
            <person name="Sun H."/>
            <person name="Lamar B."/>
            <person name="Yordan C."/>
            <person name="Ma P."/>
            <person name="Zhong J."/>
            <person name="Preston R."/>
            <person name="Vil D."/>
            <person name="Shekher M."/>
            <person name="Matero A."/>
            <person name="Shah R."/>
            <person name="Swaby I.K."/>
            <person name="O'Shaughnessy A."/>
            <person name="Rodriguez M."/>
            <person name="Hoffman J."/>
            <person name="Till S."/>
            <person name="Granat S."/>
            <person name="Shohdy N."/>
            <person name="Hasegawa A."/>
            <person name="Hameed A."/>
            <person name="Lodhi M."/>
            <person name="Johnson A."/>
            <person name="Chen E."/>
            <person name="Marra M.A."/>
            <person name="Martienssen R."/>
            <person name="McCombie W.R."/>
        </authorList>
    </citation>
    <scope>NUCLEOTIDE SEQUENCE [LARGE SCALE GENOMIC DNA]</scope>
    <source>
        <strain>cv. Columbia</strain>
    </source>
</reference>
<reference key="2">
    <citation type="journal article" date="2017" name="Plant J.">
        <title>Araport11: a complete reannotation of the Arabidopsis thaliana reference genome.</title>
        <authorList>
            <person name="Cheng C.Y."/>
            <person name="Krishnakumar V."/>
            <person name="Chan A.P."/>
            <person name="Thibaud-Nissen F."/>
            <person name="Schobel S."/>
            <person name="Town C.D."/>
        </authorList>
    </citation>
    <scope>GENOME REANNOTATION</scope>
    <source>
        <strain>cv. Columbia</strain>
    </source>
</reference>
<reference key="3">
    <citation type="journal article" date="2003" name="Science">
        <title>Empirical analysis of transcriptional activity in the Arabidopsis genome.</title>
        <authorList>
            <person name="Yamada K."/>
            <person name="Lim J."/>
            <person name="Dale J.M."/>
            <person name="Chen H."/>
            <person name="Shinn P."/>
            <person name="Palm C.J."/>
            <person name="Southwick A.M."/>
            <person name="Wu H.C."/>
            <person name="Kim C.J."/>
            <person name="Nguyen M."/>
            <person name="Pham P.K."/>
            <person name="Cheuk R.F."/>
            <person name="Karlin-Newmann G."/>
            <person name="Liu S.X."/>
            <person name="Lam B."/>
            <person name="Sakano H."/>
            <person name="Wu T."/>
            <person name="Yu G."/>
            <person name="Miranda M."/>
            <person name="Quach H.L."/>
            <person name="Tripp M."/>
            <person name="Chang C.H."/>
            <person name="Lee J.M."/>
            <person name="Toriumi M.J."/>
            <person name="Chan M.M."/>
            <person name="Tang C.C."/>
            <person name="Onodera C.S."/>
            <person name="Deng J.M."/>
            <person name="Akiyama K."/>
            <person name="Ansari Y."/>
            <person name="Arakawa T."/>
            <person name="Banh J."/>
            <person name="Banno F."/>
            <person name="Bowser L."/>
            <person name="Brooks S.Y."/>
            <person name="Carninci P."/>
            <person name="Chao Q."/>
            <person name="Choy N."/>
            <person name="Enju A."/>
            <person name="Goldsmith A.D."/>
            <person name="Gurjal M."/>
            <person name="Hansen N.F."/>
            <person name="Hayashizaki Y."/>
            <person name="Johnson-Hopson C."/>
            <person name="Hsuan V.W."/>
            <person name="Iida K."/>
            <person name="Karnes M."/>
            <person name="Khan S."/>
            <person name="Koesema E."/>
            <person name="Ishida J."/>
            <person name="Jiang P.X."/>
            <person name="Jones T."/>
            <person name="Kawai J."/>
            <person name="Kamiya A."/>
            <person name="Meyers C."/>
            <person name="Nakajima M."/>
            <person name="Narusaka M."/>
            <person name="Seki M."/>
            <person name="Sakurai T."/>
            <person name="Satou M."/>
            <person name="Tamse R."/>
            <person name="Vaysberg M."/>
            <person name="Wallender E.K."/>
            <person name="Wong C."/>
            <person name="Yamamura Y."/>
            <person name="Yuan S."/>
            <person name="Shinozaki K."/>
            <person name="Davis R.W."/>
            <person name="Theologis A."/>
            <person name="Ecker J.R."/>
        </authorList>
    </citation>
    <scope>NUCLEOTIDE SEQUENCE [LARGE SCALE MRNA]</scope>
    <source>
        <strain>cv. Columbia</strain>
    </source>
</reference>
<evidence type="ECO:0000250" key="1">
    <source>
        <dbReference type="UniProtKB" id="Q9SI37"/>
    </source>
</evidence>
<evidence type="ECO:0000255" key="2">
    <source>
        <dbReference type="PROSITE-ProRule" id="PRU00223"/>
    </source>
</evidence>
<evidence type="ECO:0000256" key="3">
    <source>
        <dbReference type="SAM" id="MobiDB-lite"/>
    </source>
</evidence>
<evidence type="ECO:0000305" key="4"/>